<gene>
    <name type="ordered locus">Asuc_1151</name>
</gene>
<comment type="subcellular location">
    <subcellularLocation>
        <location evidence="1">Cell membrane</location>
        <topology evidence="1">Multi-pass membrane protein</topology>
    </subcellularLocation>
</comment>
<comment type="similarity">
    <text evidence="1">Belongs to the UPF0756 family.</text>
</comment>
<protein>
    <recommendedName>
        <fullName evidence="1">UPF0756 membrane protein Asuc_1151</fullName>
    </recommendedName>
</protein>
<feature type="chain" id="PRO_5000258851" description="UPF0756 membrane protein Asuc_1151">
    <location>
        <begin position="1"/>
        <end position="150"/>
    </location>
</feature>
<feature type="transmembrane region" description="Helical" evidence="1">
    <location>
        <begin position="1"/>
        <end position="21"/>
    </location>
</feature>
<feature type="transmembrane region" description="Helical" evidence="1">
    <location>
        <begin position="52"/>
        <end position="72"/>
    </location>
</feature>
<feature type="transmembrane region" description="Helical" evidence="1">
    <location>
        <begin position="82"/>
        <end position="102"/>
    </location>
</feature>
<feature type="transmembrane region" description="Helical" evidence="1">
    <location>
        <begin position="123"/>
        <end position="143"/>
    </location>
</feature>
<sequence>MSLHFNSIGFLLVVLALLGVLGNNSSITISATVLLLMQQTFLSKYIPVMEKYGLNIGVIILTIGVLSPIVAGKVKIPALTELLHWKMFLSLVVGMLVAWLAGRGVSLMGSQPVLLTGLLIGTILGVGLLGGIPVGPLIAAGILSLLLGKV</sequence>
<reference key="1">
    <citation type="journal article" date="2010" name="BMC Genomics">
        <title>A genomic perspective on the potential of Actinobacillus succinogenes for industrial succinate production.</title>
        <authorList>
            <person name="McKinlay J.B."/>
            <person name="Laivenieks M."/>
            <person name="Schindler B.D."/>
            <person name="McKinlay A.A."/>
            <person name="Siddaramappa S."/>
            <person name="Challacombe J.F."/>
            <person name="Lowry S.R."/>
            <person name="Clum A."/>
            <person name="Lapidus A.L."/>
            <person name="Burkhart K.B."/>
            <person name="Harkins V."/>
            <person name="Vieille C."/>
        </authorList>
    </citation>
    <scope>NUCLEOTIDE SEQUENCE [LARGE SCALE GENOMIC DNA]</scope>
    <source>
        <strain>ATCC 55618 / DSM 22257 / CCUG 43843 / 130Z</strain>
    </source>
</reference>
<keyword id="KW-1003">Cell membrane</keyword>
<keyword id="KW-0472">Membrane</keyword>
<keyword id="KW-1185">Reference proteome</keyword>
<keyword id="KW-0812">Transmembrane</keyword>
<keyword id="KW-1133">Transmembrane helix</keyword>
<evidence type="ECO:0000255" key="1">
    <source>
        <dbReference type="HAMAP-Rule" id="MF_01874"/>
    </source>
</evidence>
<organism>
    <name type="scientific">Actinobacillus succinogenes (strain ATCC 55618 / DSM 22257 / CCUG 43843 / 130Z)</name>
    <dbReference type="NCBI Taxonomy" id="339671"/>
    <lineage>
        <taxon>Bacteria</taxon>
        <taxon>Pseudomonadati</taxon>
        <taxon>Pseudomonadota</taxon>
        <taxon>Gammaproteobacteria</taxon>
        <taxon>Pasteurellales</taxon>
        <taxon>Pasteurellaceae</taxon>
        <taxon>Actinobacillus</taxon>
    </lineage>
</organism>
<dbReference type="EMBL" id="CP000746">
    <property type="protein sequence ID" value="ABR74516.1"/>
    <property type="molecule type" value="Genomic_DNA"/>
</dbReference>
<dbReference type="RefSeq" id="WP_012072893.1">
    <property type="nucleotide sequence ID" value="NC_009655.1"/>
</dbReference>
<dbReference type="STRING" id="339671.Asuc_1151"/>
<dbReference type="KEGG" id="asu:Asuc_1151"/>
<dbReference type="eggNOG" id="COG2707">
    <property type="taxonomic scope" value="Bacteria"/>
</dbReference>
<dbReference type="HOGENOM" id="CLU_125889_0_0_6"/>
<dbReference type="OrthoDB" id="80306at2"/>
<dbReference type="Proteomes" id="UP000001114">
    <property type="component" value="Chromosome"/>
</dbReference>
<dbReference type="GO" id="GO:0005886">
    <property type="term" value="C:plasma membrane"/>
    <property type="evidence" value="ECO:0007669"/>
    <property type="project" value="UniProtKB-SubCell"/>
</dbReference>
<dbReference type="HAMAP" id="MF_01874">
    <property type="entry name" value="UPF0756"/>
    <property type="match status" value="1"/>
</dbReference>
<dbReference type="InterPro" id="IPR007382">
    <property type="entry name" value="UPF0756_TM"/>
</dbReference>
<dbReference type="PANTHER" id="PTHR38452">
    <property type="entry name" value="UPF0756 MEMBRANE PROTEIN YEAL"/>
    <property type="match status" value="1"/>
</dbReference>
<dbReference type="PANTHER" id="PTHR38452:SF1">
    <property type="entry name" value="UPF0756 MEMBRANE PROTEIN YEAL"/>
    <property type="match status" value="1"/>
</dbReference>
<dbReference type="Pfam" id="PF04284">
    <property type="entry name" value="DUF441"/>
    <property type="match status" value="1"/>
</dbReference>
<proteinExistence type="inferred from homology"/>
<accession>A6VNG9</accession>
<name>Y1151_ACTSZ</name>